<accession>A7X148</accession>
<gene>
    <name type="primary">isdA</name>
    <name type="synonym">frpA</name>
    <name type="synonym">stbA</name>
    <name type="ordered locus">SAHV_1121</name>
</gene>
<dbReference type="EMBL" id="AP009324">
    <property type="protein sequence ID" value="BAF78004.1"/>
    <property type="molecule type" value="Genomic_DNA"/>
</dbReference>
<dbReference type="RefSeq" id="WP_000160859.1">
    <property type="nucleotide sequence ID" value="NZ_CTYB01000027.1"/>
</dbReference>
<dbReference type="SMR" id="A7X148"/>
<dbReference type="KEGG" id="saw:SAHV_1121"/>
<dbReference type="HOGENOM" id="CLU_068057_0_0_9"/>
<dbReference type="PRO" id="PR:A7X148"/>
<dbReference type="GO" id="GO:0005576">
    <property type="term" value="C:extracellular region"/>
    <property type="evidence" value="ECO:0007669"/>
    <property type="project" value="UniProtKB-KW"/>
</dbReference>
<dbReference type="GO" id="GO:0046872">
    <property type="term" value="F:metal ion binding"/>
    <property type="evidence" value="ECO:0007669"/>
    <property type="project" value="UniProtKB-KW"/>
</dbReference>
<dbReference type="CDD" id="cd06920">
    <property type="entry name" value="NEAT"/>
    <property type="match status" value="1"/>
</dbReference>
<dbReference type="Gene3D" id="2.60.40.1850">
    <property type="match status" value="1"/>
</dbReference>
<dbReference type="InterPro" id="IPR050436">
    <property type="entry name" value="IsdA"/>
</dbReference>
<dbReference type="InterPro" id="IPR019931">
    <property type="entry name" value="LPXTG_anchor"/>
</dbReference>
<dbReference type="InterPro" id="IPR006635">
    <property type="entry name" value="NEAT_dom"/>
</dbReference>
<dbReference type="InterPro" id="IPR037250">
    <property type="entry name" value="NEAT_dom_sf"/>
</dbReference>
<dbReference type="NCBIfam" id="TIGR01167">
    <property type="entry name" value="LPXTG_anchor"/>
    <property type="match status" value="1"/>
</dbReference>
<dbReference type="PANTHER" id="PTHR37824">
    <property type="entry name" value="IRON-REGULATED SURFACE DETERMINANT PROTEIN C"/>
    <property type="match status" value="1"/>
</dbReference>
<dbReference type="PANTHER" id="PTHR37824:SF1">
    <property type="entry name" value="IRON-REGULATED SURFACE DETERMINANT PROTEIN C"/>
    <property type="match status" value="1"/>
</dbReference>
<dbReference type="Pfam" id="PF00746">
    <property type="entry name" value="Gram_pos_anchor"/>
    <property type="match status" value="1"/>
</dbReference>
<dbReference type="Pfam" id="PF05031">
    <property type="entry name" value="NEAT"/>
    <property type="match status" value="1"/>
</dbReference>
<dbReference type="SMART" id="SM00725">
    <property type="entry name" value="NEAT"/>
    <property type="match status" value="1"/>
</dbReference>
<dbReference type="SUPFAM" id="SSF158911">
    <property type="entry name" value="NEAT domain-like"/>
    <property type="match status" value="1"/>
</dbReference>
<dbReference type="PROSITE" id="PS50847">
    <property type="entry name" value="GRAM_POS_ANCHORING"/>
    <property type="match status" value="1"/>
</dbReference>
<dbReference type="PROSITE" id="PS50978">
    <property type="entry name" value="NEAT"/>
    <property type="match status" value="1"/>
</dbReference>
<comment type="function">
    <text evidence="2 3">Cell wall-anchored surface receptor that participates in the extraction of heme from oxidized methemoglobin/metHb to enable growth on hemoglobin as a sole iron source (By similarity). Receives heme from IsdB and transfers it to IsdC (By similarity). Also plays a role in the inhibition of host immune response. Protects S.aureus against the bactericidal protease activity of apolactoferrin. Decreases bacterial cellular hydrophobicity, which renders S.aureus resistant to bactericidal human skin fatty acids as well as to beta-defensins and cathelicidin. Also binds fibronectin and chains B-beta and gamma of fibrinogen, promoting clumping of S.aureus with fibrinogen. Involved in adherence of S.aureus to human desquamated nasal epithelial cells and is required for nasal colonization (By similarity).</text>
</comment>
<comment type="subunit">
    <text evidence="2 3">Monomer. Interacts with IsdC (By similarity). Interacts with IsdB (By similarity).</text>
</comment>
<comment type="subcellular location">
    <subcellularLocation>
        <location evidence="2">Secreted</location>
        <location evidence="2">Cell wall</location>
        <topology evidence="2">Peptidoglycan-anchor</topology>
    </subcellularLocation>
    <text evidence="2">Encodes an LPXTG motif-containing sorting signal that targets to the cell wall, which is catalyzed by sortase A.</text>
</comment>
<comment type="induction">
    <text evidence="1">Repressed by fur in the presence of iron.</text>
</comment>
<comment type="domain">
    <text evidence="1">The NEAT domain is responsible for binding Fe(3+) and Fe(2+) heme and fibrinogen. The NEAT domain is an inhibitor of apolactoferrin activity, while the C-domain confers resistance to bovine lactoferricin (By similarity).</text>
</comment>
<comment type="similarity">
    <text evidence="8">Belongs to the IsdA family.</text>
</comment>
<sequence>MTKHYLNSKYQSEQRSSAMKKITMGTASIILGSLVYIGADSQQVNAATEATNATNNQSTQVSQATSQPINFQVQKDGSSEKSHMDDYMQHPGKVIKQNNKYYFQTVLNNASFWKEYKFYNANNQELATTVVNDNKKADTRTINVAVEPGYKSLTTKVHIVVPQINYNHRYTTHLEFEKAIPTLADAAKPNNVKPVQPKPAQPKTPTEQTKPVQPKVEKVKPTVTTTSKVEDNHSTKVVSTDTTKDQTKTQTAHTVKTAQTAQEQNKVQTPVKDVATAKSESNNQAVSDNKSQQTNKVTKHNETPKQASKAKELPKTGLTSVDNFISTVAFATLALLGSLSLLLFKRKESK</sequence>
<feature type="signal peptide" evidence="1">
    <location>
        <begin position="1"/>
        <end position="46"/>
    </location>
</feature>
<feature type="chain" id="PRO_0000333240" description="Iron-regulated surface determinant protein A">
    <location>
        <begin position="47"/>
        <end position="316"/>
    </location>
</feature>
<feature type="propeptide" id="PRO_0000333241" description="Removed by sortase A" evidence="6">
    <location>
        <begin position="317"/>
        <end position="350"/>
    </location>
</feature>
<feature type="domain" description="NEAT" evidence="5">
    <location>
        <begin position="62"/>
        <end position="184"/>
    </location>
</feature>
<feature type="region of interest" description="Disordered" evidence="7">
    <location>
        <begin position="188"/>
        <end position="314"/>
    </location>
</feature>
<feature type="short sequence motif" description="LPXTG sorting signal" evidence="6">
    <location>
        <begin position="313"/>
        <end position="317"/>
    </location>
</feature>
<feature type="compositionally biased region" description="Low complexity" evidence="7">
    <location>
        <begin position="203"/>
        <end position="214"/>
    </location>
</feature>
<feature type="compositionally biased region" description="Polar residues" evidence="7">
    <location>
        <begin position="252"/>
        <end position="268"/>
    </location>
</feature>
<feature type="compositionally biased region" description="Polar residues" evidence="7">
    <location>
        <begin position="278"/>
        <end position="296"/>
    </location>
</feature>
<feature type="compositionally biased region" description="Basic and acidic residues" evidence="7">
    <location>
        <begin position="299"/>
        <end position="314"/>
    </location>
</feature>
<feature type="binding site" evidence="1">
    <location>
        <position position="75"/>
    </location>
    <ligand>
        <name>heme</name>
        <dbReference type="ChEBI" id="CHEBI:30413"/>
    </ligand>
</feature>
<feature type="binding site" evidence="1">
    <location>
        <position position="82"/>
    </location>
    <ligand>
        <name>heme</name>
        <dbReference type="ChEBI" id="CHEBI:30413"/>
    </ligand>
</feature>
<feature type="binding site" description="axial binding residue" evidence="4">
    <location>
        <position position="166"/>
    </location>
    <ligand>
        <name>heme</name>
        <dbReference type="ChEBI" id="CHEBI:30413"/>
    </ligand>
    <ligandPart>
        <name>Fe</name>
        <dbReference type="ChEBI" id="CHEBI:18248"/>
    </ligandPart>
</feature>
<feature type="modified residue" description="Pentaglycyl murein peptidoglycan amidated threonine" evidence="6">
    <location>
        <position position="316"/>
    </location>
</feature>
<evidence type="ECO:0000250" key="1"/>
<evidence type="ECO:0000250" key="2">
    <source>
        <dbReference type="UniProtKB" id="A6QG31"/>
    </source>
</evidence>
<evidence type="ECO:0000250" key="3">
    <source>
        <dbReference type="UniProtKB" id="Q7A152"/>
    </source>
</evidence>
<evidence type="ECO:0000250" key="4">
    <source>
        <dbReference type="UniProtKB" id="Q7A655"/>
    </source>
</evidence>
<evidence type="ECO:0000255" key="5">
    <source>
        <dbReference type="PROSITE-ProRule" id="PRU00337"/>
    </source>
</evidence>
<evidence type="ECO:0000255" key="6">
    <source>
        <dbReference type="PROSITE-ProRule" id="PRU00477"/>
    </source>
</evidence>
<evidence type="ECO:0000256" key="7">
    <source>
        <dbReference type="SAM" id="MobiDB-lite"/>
    </source>
</evidence>
<evidence type="ECO:0000305" key="8"/>
<organism>
    <name type="scientific">Staphylococcus aureus (strain Mu3 / ATCC 700698)</name>
    <dbReference type="NCBI Taxonomy" id="418127"/>
    <lineage>
        <taxon>Bacteria</taxon>
        <taxon>Bacillati</taxon>
        <taxon>Bacillota</taxon>
        <taxon>Bacilli</taxon>
        <taxon>Bacillales</taxon>
        <taxon>Staphylococcaceae</taxon>
        <taxon>Staphylococcus</taxon>
    </lineage>
</organism>
<protein>
    <recommendedName>
        <fullName>Iron-regulated surface determinant protein A</fullName>
    </recommendedName>
    <alternativeName>
        <fullName>Fur-regulated protein A</fullName>
    </alternativeName>
    <alternativeName>
        <fullName>Staphylococcal transferrin-binding protein A</fullName>
    </alternativeName>
</protein>
<proteinExistence type="inferred from homology"/>
<name>ISDA_STAA1</name>
<keyword id="KW-0134">Cell wall</keyword>
<keyword id="KW-0349">Heme</keyword>
<keyword id="KW-0408">Iron</keyword>
<keyword id="KW-0479">Metal-binding</keyword>
<keyword id="KW-0572">Peptidoglycan-anchor</keyword>
<keyword id="KW-0964">Secreted</keyword>
<keyword id="KW-0732">Signal</keyword>
<reference key="1">
    <citation type="journal article" date="2008" name="Antimicrob. Agents Chemother.">
        <title>Mutated response regulator graR is responsible for phenotypic conversion of Staphylococcus aureus from heterogeneous vancomycin-intermediate resistance to vancomycin-intermediate resistance.</title>
        <authorList>
            <person name="Neoh H.-M."/>
            <person name="Cui L."/>
            <person name="Yuzawa H."/>
            <person name="Takeuchi F."/>
            <person name="Matsuo M."/>
            <person name="Hiramatsu K."/>
        </authorList>
    </citation>
    <scope>NUCLEOTIDE SEQUENCE [LARGE SCALE GENOMIC DNA]</scope>
    <source>
        <strain>Mu3 / ATCC 700698</strain>
    </source>
</reference>